<comment type="cofactor">
    <cofactor evidence="2">
        <name>Mn(2+)</name>
        <dbReference type="ChEBI" id="CHEBI:29035"/>
    </cofactor>
    <text evidence="2">Binds 2 manganese ions per subunit.</text>
</comment>
<comment type="similarity">
    <text evidence="2">Belongs to the peptidase M24B family.</text>
</comment>
<reference key="1">
    <citation type="journal article" date="1997" name="Nature">
        <title>The complete genome sequence of the Gram-positive bacterium Bacillus subtilis.</title>
        <authorList>
            <person name="Kunst F."/>
            <person name="Ogasawara N."/>
            <person name="Moszer I."/>
            <person name="Albertini A.M."/>
            <person name="Alloni G."/>
            <person name="Azevedo V."/>
            <person name="Bertero M.G."/>
            <person name="Bessieres P."/>
            <person name="Bolotin A."/>
            <person name="Borchert S."/>
            <person name="Borriss R."/>
            <person name="Boursier L."/>
            <person name="Brans A."/>
            <person name="Braun M."/>
            <person name="Brignell S.C."/>
            <person name="Bron S."/>
            <person name="Brouillet S."/>
            <person name="Bruschi C.V."/>
            <person name="Caldwell B."/>
            <person name="Capuano V."/>
            <person name="Carter N.M."/>
            <person name="Choi S.-K."/>
            <person name="Codani J.-J."/>
            <person name="Connerton I.F."/>
            <person name="Cummings N.J."/>
            <person name="Daniel R.A."/>
            <person name="Denizot F."/>
            <person name="Devine K.M."/>
            <person name="Duesterhoeft A."/>
            <person name="Ehrlich S.D."/>
            <person name="Emmerson P.T."/>
            <person name="Entian K.-D."/>
            <person name="Errington J."/>
            <person name="Fabret C."/>
            <person name="Ferrari E."/>
            <person name="Foulger D."/>
            <person name="Fritz C."/>
            <person name="Fujita M."/>
            <person name="Fujita Y."/>
            <person name="Fuma S."/>
            <person name="Galizzi A."/>
            <person name="Galleron N."/>
            <person name="Ghim S.-Y."/>
            <person name="Glaser P."/>
            <person name="Goffeau A."/>
            <person name="Golightly E.J."/>
            <person name="Grandi G."/>
            <person name="Guiseppi G."/>
            <person name="Guy B.J."/>
            <person name="Haga K."/>
            <person name="Haiech J."/>
            <person name="Harwood C.R."/>
            <person name="Henaut A."/>
            <person name="Hilbert H."/>
            <person name="Holsappel S."/>
            <person name="Hosono S."/>
            <person name="Hullo M.-F."/>
            <person name="Itaya M."/>
            <person name="Jones L.-M."/>
            <person name="Joris B."/>
            <person name="Karamata D."/>
            <person name="Kasahara Y."/>
            <person name="Klaerr-Blanchard M."/>
            <person name="Klein C."/>
            <person name="Kobayashi Y."/>
            <person name="Koetter P."/>
            <person name="Koningstein G."/>
            <person name="Krogh S."/>
            <person name="Kumano M."/>
            <person name="Kurita K."/>
            <person name="Lapidus A."/>
            <person name="Lardinois S."/>
            <person name="Lauber J."/>
            <person name="Lazarevic V."/>
            <person name="Lee S.-M."/>
            <person name="Levine A."/>
            <person name="Liu H."/>
            <person name="Masuda S."/>
            <person name="Mauel C."/>
            <person name="Medigue C."/>
            <person name="Medina N."/>
            <person name="Mellado R.P."/>
            <person name="Mizuno M."/>
            <person name="Moestl D."/>
            <person name="Nakai S."/>
            <person name="Noback M."/>
            <person name="Noone D."/>
            <person name="O'Reilly M."/>
            <person name="Ogawa K."/>
            <person name="Ogiwara A."/>
            <person name="Oudega B."/>
            <person name="Park S.-H."/>
            <person name="Parro V."/>
            <person name="Pohl T.M."/>
            <person name="Portetelle D."/>
            <person name="Porwollik S."/>
            <person name="Prescott A.M."/>
            <person name="Presecan E."/>
            <person name="Pujic P."/>
            <person name="Purnelle B."/>
            <person name="Rapoport G."/>
            <person name="Rey M."/>
            <person name="Reynolds S."/>
            <person name="Rieger M."/>
            <person name="Rivolta C."/>
            <person name="Rocha E."/>
            <person name="Roche B."/>
            <person name="Rose M."/>
            <person name="Sadaie Y."/>
            <person name="Sato T."/>
            <person name="Scanlan E."/>
            <person name="Schleich S."/>
            <person name="Schroeter R."/>
            <person name="Scoffone F."/>
            <person name="Sekiguchi J."/>
            <person name="Sekowska A."/>
            <person name="Seror S.J."/>
            <person name="Serror P."/>
            <person name="Shin B.-S."/>
            <person name="Soldo B."/>
            <person name="Sorokin A."/>
            <person name="Tacconi E."/>
            <person name="Takagi T."/>
            <person name="Takahashi H."/>
            <person name="Takemaru K."/>
            <person name="Takeuchi M."/>
            <person name="Tamakoshi A."/>
            <person name="Tanaka T."/>
            <person name="Terpstra P."/>
            <person name="Tognoni A."/>
            <person name="Tosato V."/>
            <person name="Uchiyama S."/>
            <person name="Vandenbol M."/>
            <person name="Vannier F."/>
            <person name="Vassarotti A."/>
            <person name="Viari A."/>
            <person name="Wambutt R."/>
            <person name="Wedler E."/>
            <person name="Wedler H."/>
            <person name="Weitzenegger T."/>
            <person name="Winters P."/>
            <person name="Wipat A."/>
            <person name="Yamamoto H."/>
            <person name="Yamane K."/>
            <person name="Yasumoto K."/>
            <person name="Yata K."/>
            <person name="Yoshida K."/>
            <person name="Yoshikawa H.-F."/>
            <person name="Zumstein E."/>
            <person name="Yoshikawa H."/>
            <person name="Danchin A."/>
        </authorList>
    </citation>
    <scope>NUCLEOTIDE SEQUENCE [LARGE SCALE GENOMIC DNA]</scope>
    <source>
        <strain>168</strain>
    </source>
</reference>
<proteinExistence type="inferred from homology"/>
<gene>
    <name type="primary">ykvY</name>
    <name type="ordered locus">BSU13860</name>
</gene>
<feature type="chain" id="PRO_0000360510" description="Putative dipeptidase YkvY">
    <location>
        <begin position="1"/>
        <end position="363"/>
    </location>
</feature>
<feature type="binding site" evidence="1">
    <location>
        <position position="222"/>
    </location>
    <ligand>
        <name>Mn(2+)</name>
        <dbReference type="ChEBI" id="CHEBI:29035"/>
        <label>2</label>
    </ligand>
</feature>
<feature type="binding site" evidence="1">
    <location>
        <position position="233"/>
    </location>
    <ligand>
        <name>Mn(2+)</name>
        <dbReference type="ChEBI" id="CHEBI:29035"/>
        <label>1</label>
    </ligand>
</feature>
<feature type="binding site" evidence="1">
    <location>
        <position position="233"/>
    </location>
    <ligand>
        <name>Mn(2+)</name>
        <dbReference type="ChEBI" id="CHEBI:29035"/>
        <label>2</label>
    </ligand>
</feature>
<feature type="binding site" evidence="1">
    <location>
        <position position="297"/>
    </location>
    <ligand>
        <name>Mn(2+)</name>
        <dbReference type="ChEBI" id="CHEBI:29035"/>
        <label>1</label>
    </ligand>
</feature>
<feature type="binding site" evidence="1">
    <location>
        <position position="326"/>
    </location>
    <ligand>
        <name>Mn(2+)</name>
        <dbReference type="ChEBI" id="CHEBI:29035"/>
        <label>1</label>
    </ligand>
</feature>
<feature type="binding site" evidence="1">
    <location>
        <position position="340"/>
    </location>
    <ligand>
        <name>Mn(2+)</name>
        <dbReference type="ChEBI" id="CHEBI:29035"/>
        <label>1</label>
    </ligand>
</feature>
<feature type="binding site" evidence="1">
    <location>
        <position position="340"/>
    </location>
    <ligand>
        <name>Mn(2+)</name>
        <dbReference type="ChEBI" id="CHEBI:29035"/>
        <label>2</label>
    </ligand>
</feature>
<evidence type="ECO:0000255" key="1"/>
<evidence type="ECO:0000305" key="2"/>
<dbReference type="EC" id="3.4.13.-"/>
<dbReference type="EMBL" id="AL009126">
    <property type="protein sequence ID" value="CAB13259.1"/>
    <property type="molecule type" value="Genomic_DNA"/>
</dbReference>
<dbReference type="PIR" id="G69869">
    <property type="entry name" value="G69869"/>
</dbReference>
<dbReference type="SMR" id="O31689"/>
<dbReference type="FunCoup" id="O31689">
    <property type="interactions" value="544"/>
</dbReference>
<dbReference type="IntAct" id="O31689">
    <property type="interactions" value="1"/>
</dbReference>
<dbReference type="MINT" id="O31689"/>
<dbReference type="STRING" id="224308.BSU13860"/>
<dbReference type="jPOST" id="O31689"/>
<dbReference type="PaxDb" id="224308-BSU13860"/>
<dbReference type="EnsemblBacteria" id="CAB13259">
    <property type="protein sequence ID" value="CAB13259"/>
    <property type="gene ID" value="BSU_13860"/>
</dbReference>
<dbReference type="GeneID" id="939258"/>
<dbReference type="KEGG" id="bsu:BSU13860"/>
<dbReference type="PATRIC" id="fig|224308.179.peg.1511"/>
<dbReference type="eggNOG" id="COG0006">
    <property type="taxonomic scope" value="Bacteria"/>
</dbReference>
<dbReference type="InParanoid" id="O31689"/>
<dbReference type="OrthoDB" id="9806388at2"/>
<dbReference type="PhylomeDB" id="O31689"/>
<dbReference type="BioCyc" id="BSUB:BSU13860-MONOMER"/>
<dbReference type="Proteomes" id="UP000001570">
    <property type="component" value="Chromosome"/>
</dbReference>
<dbReference type="GO" id="GO:0016805">
    <property type="term" value="F:dipeptidase activity"/>
    <property type="evidence" value="ECO:0007669"/>
    <property type="project" value="UniProtKB-KW"/>
</dbReference>
<dbReference type="GO" id="GO:0046872">
    <property type="term" value="F:metal ion binding"/>
    <property type="evidence" value="ECO:0007669"/>
    <property type="project" value="UniProtKB-KW"/>
</dbReference>
<dbReference type="GO" id="GO:0070006">
    <property type="term" value="F:metalloaminopeptidase activity"/>
    <property type="evidence" value="ECO:0000318"/>
    <property type="project" value="GO_Central"/>
</dbReference>
<dbReference type="GO" id="GO:0006508">
    <property type="term" value="P:proteolysis"/>
    <property type="evidence" value="ECO:0000318"/>
    <property type="project" value="GO_Central"/>
</dbReference>
<dbReference type="CDD" id="cd01092">
    <property type="entry name" value="APP-like"/>
    <property type="match status" value="1"/>
</dbReference>
<dbReference type="FunFam" id="3.90.230.10:FF:000014">
    <property type="entry name" value="Aminopeptidase P family protein"/>
    <property type="match status" value="1"/>
</dbReference>
<dbReference type="Gene3D" id="3.90.230.10">
    <property type="entry name" value="Creatinase/methionine aminopeptidase superfamily"/>
    <property type="match status" value="1"/>
</dbReference>
<dbReference type="Gene3D" id="3.40.350.10">
    <property type="entry name" value="Creatinase/prolidase N-terminal domain"/>
    <property type="match status" value="1"/>
</dbReference>
<dbReference type="InterPro" id="IPR029149">
    <property type="entry name" value="Creatin/AminoP/Spt16_N"/>
</dbReference>
<dbReference type="InterPro" id="IPR036005">
    <property type="entry name" value="Creatinase/aminopeptidase-like"/>
</dbReference>
<dbReference type="InterPro" id="IPR000587">
    <property type="entry name" value="Creatinase_N"/>
</dbReference>
<dbReference type="InterPro" id="IPR000994">
    <property type="entry name" value="Pept_M24"/>
</dbReference>
<dbReference type="InterPro" id="IPR001714">
    <property type="entry name" value="Pept_M24_MAP"/>
</dbReference>
<dbReference type="InterPro" id="IPR050659">
    <property type="entry name" value="Peptidase_M24B"/>
</dbReference>
<dbReference type="InterPro" id="IPR001131">
    <property type="entry name" value="Peptidase_M24B_aminopep-P_CS"/>
</dbReference>
<dbReference type="PANTHER" id="PTHR46112">
    <property type="entry name" value="AMINOPEPTIDASE"/>
    <property type="match status" value="1"/>
</dbReference>
<dbReference type="PANTHER" id="PTHR46112:SF10">
    <property type="entry name" value="DIPEPTIDASE YKVY-RELATED"/>
    <property type="match status" value="1"/>
</dbReference>
<dbReference type="Pfam" id="PF01321">
    <property type="entry name" value="Creatinase_N"/>
    <property type="match status" value="1"/>
</dbReference>
<dbReference type="Pfam" id="PF00557">
    <property type="entry name" value="Peptidase_M24"/>
    <property type="match status" value="1"/>
</dbReference>
<dbReference type="PRINTS" id="PR00599">
    <property type="entry name" value="MAPEPTIDASE"/>
</dbReference>
<dbReference type="SUPFAM" id="SSF55920">
    <property type="entry name" value="Creatinase/aminopeptidase"/>
    <property type="match status" value="1"/>
</dbReference>
<dbReference type="SUPFAM" id="SSF53092">
    <property type="entry name" value="Creatinase/prolidase N-terminal domain"/>
    <property type="match status" value="1"/>
</dbReference>
<dbReference type="PROSITE" id="PS00491">
    <property type="entry name" value="PROLINE_PEPTIDASE"/>
    <property type="match status" value="1"/>
</dbReference>
<protein>
    <recommendedName>
        <fullName>Putative dipeptidase YkvY</fullName>
        <ecNumber>3.4.13.-</ecNumber>
    </recommendedName>
</protein>
<organism>
    <name type="scientific">Bacillus subtilis (strain 168)</name>
    <dbReference type="NCBI Taxonomy" id="224308"/>
    <lineage>
        <taxon>Bacteria</taxon>
        <taxon>Bacillati</taxon>
        <taxon>Bacillota</taxon>
        <taxon>Bacilli</taxon>
        <taxon>Bacillales</taxon>
        <taxon>Bacillaceae</taxon>
        <taxon>Bacillus</taxon>
    </lineage>
</organism>
<accession>O31689</accession>
<name>YKVY_BACSU</name>
<sequence length="363" mass="40334">MNRIQRVSSWLKEAGHTAAFIHTKENVFYLTGFYTEPHERLMGLFIFQEEEPFFVCPGMEAGQARNAGWNHEIIGYADHENPWELIEKALKKRNISIHMLAVEKDSISLSRAEQLKHATGGAQFVSAEETLNQFRLIKDDNEIRLLKEAAKLADYGVEVGTAALREGISEVEVLAQIEYELKKKGIQGMSFSTMVLFGEKSGQPHGNPGTATLKKGDFVLFDLGVILDGYCSDITRTFAYKTINPKQEAIYETVLQAEKAAIEASKPGVRIGDLDLTARGIIEKAGYGDYFPHRLGHGLGISVHEYPSMSQANDTLLQEGMVYTIEPGIYVPEIGGVRIEDDVHVTKDGAVALTQYPKDLIIL</sequence>
<keyword id="KW-0224">Dipeptidase</keyword>
<keyword id="KW-0378">Hydrolase</keyword>
<keyword id="KW-0464">Manganese</keyword>
<keyword id="KW-0479">Metal-binding</keyword>
<keyword id="KW-0482">Metalloprotease</keyword>
<keyword id="KW-0645">Protease</keyword>
<keyword id="KW-1185">Reference proteome</keyword>